<keyword id="KW-0560">Oxidoreductase</keyword>
<reference key="1">
    <citation type="journal article" date="2003" name="Mol. Microbiol.">
        <title>An integrated analysis of the genome of the hyperthermophilic archaeon Pyrococcus abyssi.</title>
        <authorList>
            <person name="Cohen G.N."/>
            <person name="Barbe V."/>
            <person name="Flament D."/>
            <person name="Galperin M."/>
            <person name="Heilig R."/>
            <person name="Lecompte O."/>
            <person name="Poch O."/>
            <person name="Prieur D."/>
            <person name="Querellou J."/>
            <person name="Ripp R."/>
            <person name="Thierry J.-C."/>
            <person name="Van der Oost J."/>
            <person name="Weissenbach J."/>
            <person name="Zivanovic Y."/>
            <person name="Forterre P."/>
        </authorList>
    </citation>
    <scope>NUCLEOTIDE SEQUENCE [LARGE SCALE GENOMIC DNA]</scope>
    <source>
        <strain>GE5 / Orsay</strain>
    </source>
</reference>
<reference key="2">
    <citation type="journal article" date="2012" name="Curr. Microbiol.">
        <title>Re-annotation of two hyperthermophilic archaea Pyrococcus abyssi GE5 and Pyrococcus furiosus DSM 3638.</title>
        <authorList>
            <person name="Gao J."/>
            <person name="Wang J."/>
        </authorList>
    </citation>
    <scope>GENOME REANNOTATION</scope>
    <source>
        <strain>GE5 / Orsay</strain>
    </source>
</reference>
<protein>
    <recommendedName>
        <fullName>Pyruvate synthase subunit PorA</fullName>
        <ecNumber>1.2.7.1</ecNumber>
    </recommendedName>
    <alternativeName>
        <fullName>Pyruvate oxidoreductase alpha chain</fullName>
        <shortName>POR</shortName>
    </alternativeName>
    <alternativeName>
        <fullName>Pyruvic-ferredoxin oxidoreductase subunit alpha</fullName>
    </alternativeName>
</protein>
<proteinExistence type="predicted"/>
<accession>Q9UYZ4</accession>
<accession>G8ZHG9</accession>
<dbReference type="EC" id="1.2.7.1"/>
<dbReference type="EMBL" id="AJ248287">
    <property type="protein sequence ID" value="CAB50268.1"/>
    <property type="molecule type" value="Genomic_DNA"/>
</dbReference>
<dbReference type="EMBL" id="HE613800">
    <property type="protein sequence ID" value="CCE70806.1"/>
    <property type="molecule type" value="Genomic_DNA"/>
</dbReference>
<dbReference type="PIR" id="G75046">
    <property type="entry name" value="G75046"/>
</dbReference>
<dbReference type="RefSeq" id="WP_010868478.1">
    <property type="nucleotide sequence ID" value="NC_000868.1"/>
</dbReference>
<dbReference type="SMR" id="Q9UYZ4"/>
<dbReference type="STRING" id="272844.PAB1475"/>
<dbReference type="KEGG" id="pab:PAB1475"/>
<dbReference type="PATRIC" id="fig|272844.11.peg.1449"/>
<dbReference type="eggNOG" id="arCOG01608">
    <property type="taxonomic scope" value="Archaea"/>
</dbReference>
<dbReference type="HOGENOM" id="CLU_002569_5_0_2"/>
<dbReference type="OrthoDB" id="372068at2157"/>
<dbReference type="PhylomeDB" id="Q9UYZ4"/>
<dbReference type="Proteomes" id="UP000000810">
    <property type="component" value="Chromosome"/>
</dbReference>
<dbReference type="Proteomes" id="UP000009139">
    <property type="component" value="Chromosome"/>
</dbReference>
<dbReference type="GO" id="GO:0019164">
    <property type="term" value="F:pyruvate synthase activity"/>
    <property type="evidence" value="ECO:0007669"/>
    <property type="project" value="UniProtKB-EC"/>
</dbReference>
<dbReference type="GO" id="GO:0006979">
    <property type="term" value="P:response to oxidative stress"/>
    <property type="evidence" value="ECO:0007669"/>
    <property type="project" value="TreeGrafter"/>
</dbReference>
<dbReference type="CDD" id="cd07034">
    <property type="entry name" value="TPP_PYR_PFOR_IOR-alpha_like"/>
    <property type="match status" value="1"/>
</dbReference>
<dbReference type="FunFam" id="3.40.50.920:FF:000010">
    <property type="entry name" value="Pyruvate ferredoxin oxidoreductase, alpha subunit"/>
    <property type="match status" value="1"/>
</dbReference>
<dbReference type="FunFam" id="3.40.50.970:FF:000012">
    <property type="entry name" value="Pyruvate:ferredoxin (Flavodoxin) oxidoreductase"/>
    <property type="match status" value="1"/>
</dbReference>
<dbReference type="Gene3D" id="3.40.50.920">
    <property type="match status" value="1"/>
</dbReference>
<dbReference type="Gene3D" id="3.40.50.970">
    <property type="match status" value="1"/>
</dbReference>
<dbReference type="InterPro" id="IPR033412">
    <property type="entry name" value="PFOR_II"/>
</dbReference>
<dbReference type="InterPro" id="IPR050722">
    <property type="entry name" value="Pyruvate:ferred/Flavod_OxRd"/>
</dbReference>
<dbReference type="InterPro" id="IPR053390">
    <property type="entry name" value="Pyruvate_synthase_PorA"/>
</dbReference>
<dbReference type="InterPro" id="IPR002880">
    <property type="entry name" value="Pyrv_Fd/Flavodoxin_OxRdtase_N"/>
</dbReference>
<dbReference type="InterPro" id="IPR029061">
    <property type="entry name" value="THDP-binding"/>
</dbReference>
<dbReference type="InterPro" id="IPR009014">
    <property type="entry name" value="Transketo_C/PFOR_II"/>
</dbReference>
<dbReference type="NCBIfam" id="NF040682">
    <property type="entry name" value="PorA_Arch"/>
    <property type="match status" value="1"/>
</dbReference>
<dbReference type="NCBIfam" id="NF006233">
    <property type="entry name" value="PRK08367.1"/>
    <property type="match status" value="1"/>
</dbReference>
<dbReference type="PANTHER" id="PTHR32154">
    <property type="entry name" value="PYRUVATE-FLAVODOXIN OXIDOREDUCTASE-RELATED"/>
    <property type="match status" value="1"/>
</dbReference>
<dbReference type="PANTHER" id="PTHR32154:SF0">
    <property type="entry name" value="PYRUVATE-FLAVODOXIN OXIDOREDUCTASE-RELATED"/>
    <property type="match status" value="1"/>
</dbReference>
<dbReference type="Pfam" id="PF17147">
    <property type="entry name" value="PFOR_II"/>
    <property type="match status" value="1"/>
</dbReference>
<dbReference type="Pfam" id="PF01855">
    <property type="entry name" value="POR_N"/>
    <property type="match status" value="1"/>
</dbReference>
<dbReference type="SUPFAM" id="SSF52518">
    <property type="entry name" value="Thiamin diphosphate-binding fold (THDP-binding)"/>
    <property type="match status" value="1"/>
</dbReference>
<dbReference type="SUPFAM" id="SSF52922">
    <property type="entry name" value="TK C-terminal domain-like"/>
    <property type="match status" value="1"/>
</dbReference>
<gene>
    <name type="primary">porA</name>
    <name type="ordered locus">PYRAB13630</name>
    <name type="ORF">PAB1475</name>
</gene>
<comment type="catalytic activity">
    <reaction>
        <text>2 oxidized [2Fe-2S]-[ferredoxin] + pyruvate + CoA = 2 reduced [2Fe-2S]-[ferredoxin] + acetyl-CoA + CO2 + H(+)</text>
        <dbReference type="Rhea" id="RHEA:12765"/>
        <dbReference type="Rhea" id="RHEA-COMP:10000"/>
        <dbReference type="Rhea" id="RHEA-COMP:10001"/>
        <dbReference type="ChEBI" id="CHEBI:15361"/>
        <dbReference type="ChEBI" id="CHEBI:15378"/>
        <dbReference type="ChEBI" id="CHEBI:16526"/>
        <dbReference type="ChEBI" id="CHEBI:33737"/>
        <dbReference type="ChEBI" id="CHEBI:33738"/>
        <dbReference type="ChEBI" id="CHEBI:57287"/>
        <dbReference type="ChEBI" id="CHEBI:57288"/>
        <dbReference type="EC" id="1.2.7.1"/>
    </reaction>
</comment>
<comment type="subunit">
    <text>Heterotetramer of one alpha, one beta, one delta and one gamma chain.</text>
</comment>
<sequence>MPIRTVMKANEAAAWAAKLAKPKVIAAFPITPSTLVPEKISEFVANGELDAEFIKVESEHSAISALVGASAAGVRTFTATASQGLALMHEVLFIAAGMRLPIVMAIGNRALSAPINIWNDWQDTISQRDTGWIQFYAENNQEALDLILLAYKVAEDERVLLPAMVGFDAFILTHTVEPVEIPDQEVVDEFLGEYEPKHAYLDPKRPITQGTLAFPAHYMEARYLVWEAMENARKVIDEAFAEFEKKFGRKYQKIEEYRTDDAEIIFVTMGSLAGTLKDWVDKKREEGYKVGAAKMTVYRPFPVEEIRELAKKTKVLAFIEKDISMGLYGAVFTDASAALINESEKPLMLDFIAGLGGRDVTFNQLDEALSIAKEALEKGKVEKPIHWIGLRKELL</sequence>
<organism>
    <name type="scientific">Pyrococcus abyssi (strain GE5 / Orsay)</name>
    <dbReference type="NCBI Taxonomy" id="272844"/>
    <lineage>
        <taxon>Archaea</taxon>
        <taxon>Methanobacteriati</taxon>
        <taxon>Methanobacteriota</taxon>
        <taxon>Thermococci</taxon>
        <taxon>Thermococcales</taxon>
        <taxon>Thermococcaceae</taxon>
        <taxon>Pyrococcus</taxon>
    </lineage>
</organism>
<feature type="chain" id="PRO_0000099899" description="Pyruvate synthase subunit PorA">
    <location>
        <begin position="1"/>
        <end position="395"/>
    </location>
</feature>
<name>PORA_PYRAB</name>